<gene>
    <name evidence="2" type="primary">rplU</name>
    <name type="ordered locus">TTHA1783</name>
</gene>
<accession>P60492</accession>
<accession>Q5SHE7</accession>
<reference key="1">
    <citation type="submission" date="2004-11" db="EMBL/GenBank/DDBJ databases">
        <title>Complete genome sequence of Thermus thermophilus HB8.</title>
        <authorList>
            <person name="Masui R."/>
            <person name="Kurokawa K."/>
            <person name="Nakagawa N."/>
            <person name="Tokunaga F."/>
            <person name="Koyama Y."/>
            <person name="Shibata T."/>
            <person name="Oshima T."/>
            <person name="Yokoyama S."/>
            <person name="Yasunaga T."/>
            <person name="Kuramitsu S."/>
        </authorList>
    </citation>
    <scope>NUCLEOTIDE SEQUENCE [LARGE SCALE GENOMIC DNA]</scope>
    <source>
        <strain>ATCC 27634 / DSM 579 / HB8</strain>
    </source>
</reference>
<reference key="2">
    <citation type="journal article" date="2000" name="Biol. Chem.">
        <title>Identification of the 50S ribosomal proteins from the eubacterium Thermus thermophilus.</title>
        <authorList>
            <person name="Katsani K.R."/>
            <person name="Tsiboli P."/>
            <person name="Anagnostopoulos K."/>
            <person name="Urlaub H."/>
            <person name="Choli-Papadopoulou T."/>
        </authorList>
    </citation>
    <scope>PROTEIN SEQUENCE OF 1-18</scope>
    <source>
        <strain>ATCC 27634 / DSM 579 / HB8</strain>
    </source>
</reference>
<reference key="3">
    <citation type="journal article" date="2005" name="Proteomics">
        <title>Extending ribosomal protein identifications to unsequenced bacterial strains using matrix-assisted laser desorption/ionization mass spectrometry.</title>
        <authorList>
            <person name="Suh M.-J."/>
            <person name="Hamburg D.M."/>
            <person name="Gregory S.T."/>
            <person name="Dahlberg A.E."/>
            <person name="Limbach P.A."/>
        </authorList>
    </citation>
    <scope>MASS SPECTROMETRY</scope>
    <source>
        <strain>ATCC 27634 / DSM 579 / HB8</strain>
    </source>
</reference>
<reference key="4">
    <citation type="journal article" date="2001" name="Science">
        <title>Crystal structure of the ribosome at 5.5 A resolution.</title>
        <authorList>
            <person name="Yusupov M.M."/>
            <person name="Yusupova G.Z."/>
            <person name="Baucom A."/>
            <person name="Lieberman K."/>
            <person name="Earnest T.N."/>
            <person name="Cate J.H.D."/>
            <person name="Noller H.F."/>
        </authorList>
    </citation>
    <scope>STRUCTURE OF THE RIBOSOME</scope>
</reference>
<reference key="5">
    <citation type="journal article" date="2005" name="Science">
        <title>Translational operator of mRNA on the ribosome: how repressor proteins exclude ribosome binding.</title>
        <authorList>
            <person name="Jenner L."/>
            <person name="Romby P."/>
            <person name="Rees B."/>
            <person name="Schulze-Briese C."/>
            <person name="Springer M."/>
            <person name="Ehresmann C."/>
            <person name="Ehresmann B."/>
            <person name="Moras D."/>
            <person name="Yusupova G."/>
            <person name="Yusupov M."/>
        </authorList>
    </citation>
    <scope>X-RAY CRYSTALLOGRAPHY (5.5 ANGSTROMS) OF THE RIBOSOME</scope>
</reference>
<reference key="6">
    <citation type="journal article" date="2006" name="Science">
        <title>Structure of the 70S ribosome complexed with mRNA and tRNA.</title>
        <authorList>
            <person name="Selmer M."/>
            <person name="Dunham C.M."/>
            <person name="Murphy F.V. IV"/>
            <person name="Weixlbaumer A."/>
            <person name="Petry S."/>
            <person name="Kelley A.C."/>
            <person name="Weir J.R."/>
            <person name="Ramakrishnan V."/>
        </authorList>
    </citation>
    <scope>X-RAY CRYSTALLOGRAPHY (2.8 ANGSTROMS) OF 1-101 OF THE RIBOSOME</scope>
</reference>
<reference key="7">
    <citation type="journal article" date="2008" name="Science">
        <title>Insights into translational termination from the structure of RF2 bound to the ribosome.</title>
        <authorList>
            <person name="Weixlbaumer A."/>
            <person name="Jin H."/>
            <person name="Neubauer C."/>
            <person name="Voorhees R.M."/>
            <person name="Petry S."/>
            <person name="Kelley A.C."/>
            <person name="Ramakrishnan V."/>
        </authorList>
    </citation>
    <scope>X-RAY CRYSTALLOGRAPHY (3.45 ANGSTROMS) OF 70S RIBOSOME IN COMPLEX WITH RF2</scope>
    <scope>SUBUNIT</scope>
</reference>
<reference key="8">
    <citation type="journal article" date="2010" name="Proc. Natl. Acad. Sci. U.S.A.">
        <title>Structure of the 70S ribosome bound to release factor 2 and a substrate analog provides insights into catalysis of peptide release.</title>
        <authorList>
            <person name="Jin H."/>
            <person name="Kelley A.C."/>
            <person name="Loakes D."/>
            <person name="Ramakrishnan V."/>
        </authorList>
    </citation>
    <scope>X-RAY CRYSTALLOGRAPHY (3.10 ANGSTROMS) OF 70S RIBOSOME IN COMPLEX WITH RF2</scope>
    <scope>SUBUNIT</scope>
</reference>
<keyword id="KW-0002">3D-structure</keyword>
<keyword id="KW-0903">Direct protein sequencing</keyword>
<keyword id="KW-1185">Reference proteome</keyword>
<keyword id="KW-0687">Ribonucleoprotein</keyword>
<keyword id="KW-0689">Ribosomal protein</keyword>
<keyword id="KW-0694">RNA-binding</keyword>
<keyword id="KW-0699">rRNA-binding</keyword>
<comment type="function">
    <text evidence="2">This protein binds to 23S rRNA in the presence of protein L20 (By similarity). Found on the solvent side of the large subunit.</text>
</comment>
<comment type="subunit">
    <text evidence="1">Contacts protein L20 (By similarity). Part of the 50S ribosomal subunit.</text>
</comment>
<comment type="mass spectrometry" mass="11048.0" method="MALDI" evidence="3"/>
<comment type="similarity">
    <text evidence="2">Belongs to the bacterial ribosomal protein bL21 family.</text>
</comment>
<evidence type="ECO:0000250" key="1"/>
<evidence type="ECO:0000255" key="2">
    <source>
        <dbReference type="HAMAP-Rule" id="MF_01363"/>
    </source>
</evidence>
<evidence type="ECO:0000269" key="3">
    <source>
    </source>
</evidence>
<evidence type="ECO:0000305" key="4"/>
<evidence type="ECO:0007829" key="5">
    <source>
        <dbReference type="PDB" id="4WT8"/>
    </source>
</evidence>
<dbReference type="EMBL" id="AP008226">
    <property type="protein sequence ID" value="BAD71606.1"/>
    <property type="molecule type" value="Genomic_DNA"/>
</dbReference>
<dbReference type="RefSeq" id="WP_008633581.1">
    <property type="nucleotide sequence ID" value="NC_006461.1"/>
</dbReference>
<dbReference type="RefSeq" id="YP_145049.1">
    <property type="nucleotide sequence ID" value="NC_006461.1"/>
</dbReference>
<dbReference type="PDB" id="1VVJ">
    <property type="method" value="X-ray"/>
    <property type="resolution" value="3.44 A"/>
    <property type="chains" value="RV/YV=1-101"/>
</dbReference>
<dbReference type="PDB" id="1VY4">
    <property type="method" value="X-ray"/>
    <property type="resolution" value="2.60 A"/>
    <property type="chains" value="BV/DV=1-101"/>
</dbReference>
<dbReference type="PDB" id="1VY5">
    <property type="method" value="X-ray"/>
    <property type="resolution" value="2.55 A"/>
    <property type="chains" value="BV/DV=1-101"/>
</dbReference>
<dbReference type="PDB" id="1VY6">
    <property type="method" value="X-ray"/>
    <property type="resolution" value="2.90 A"/>
    <property type="chains" value="BV/DV=1-101"/>
</dbReference>
<dbReference type="PDB" id="1VY7">
    <property type="method" value="X-ray"/>
    <property type="resolution" value="2.80 A"/>
    <property type="chains" value="BV/DV=1-101"/>
</dbReference>
<dbReference type="PDB" id="4L47">
    <property type="method" value="X-ray"/>
    <property type="resolution" value="3.22 A"/>
    <property type="chains" value="RV/YV=1-101"/>
</dbReference>
<dbReference type="PDB" id="4L71">
    <property type="method" value="X-ray"/>
    <property type="resolution" value="3.90 A"/>
    <property type="chains" value="RV/YV=1-101"/>
</dbReference>
<dbReference type="PDB" id="4LEL">
    <property type="method" value="X-ray"/>
    <property type="resolution" value="3.90 A"/>
    <property type="chains" value="RV/YV=1-101"/>
</dbReference>
<dbReference type="PDB" id="4LFZ">
    <property type="method" value="X-ray"/>
    <property type="resolution" value="3.92 A"/>
    <property type="chains" value="RV/YV=1-101"/>
</dbReference>
<dbReference type="PDB" id="4LNT">
    <property type="method" value="X-ray"/>
    <property type="resolution" value="2.94 A"/>
    <property type="chains" value="RV/YV=1-101"/>
</dbReference>
<dbReference type="PDB" id="4LSK">
    <property type="method" value="X-ray"/>
    <property type="resolution" value="3.48 A"/>
    <property type="chains" value="RV/YV=1-101"/>
</dbReference>
<dbReference type="PDB" id="4LT8">
    <property type="method" value="X-ray"/>
    <property type="resolution" value="3.14 A"/>
    <property type="chains" value="RV/YV=1-101"/>
</dbReference>
<dbReference type="PDB" id="4P6F">
    <property type="method" value="X-ray"/>
    <property type="resolution" value="3.60 A"/>
    <property type="chains" value="RV/YV=1-101"/>
</dbReference>
<dbReference type="PDB" id="4P70">
    <property type="method" value="X-ray"/>
    <property type="resolution" value="3.68 A"/>
    <property type="chains" value="RV/YV=1-101"/>
</dbReference>
<dbReference type="PDB" id="4TUA">
    <property type="method" value="X-ray"/>
    <property type="resolution" value="3.60 A"/>
    <property type="chains" value="RV/YV=1-101"/>
</dbReference>
<dbReference type="PDB" id="4TUB">
    <property type="method" value="X-ray"/>
    <property type="resolution" value="3.60 A"/>
    <property type="chains" value="RV/YV=1-101"/>
</dbReference>
<dbReference type="PDB" id="4TUC">
    <property type="method" value="X-ray"/>
    <property type="resolution" value="3.60 A"/>
    <property type="chains" value="RV/YV=1-101"/>
</dbReference>
<dbReference type="PDB" id="4TUD">
    <property type="method" value="X-ray"/>
    <property type="resolution" value="3.60 A"/>
    <property type="chains" value="RV/YV=1-101"/>
</dbReference>
<dbReference type="PDB" id="4TUE">
    <property type="method" value="X-ray"/>
    <property type="resolution" value="3.50 A"/>
    <property type="chains" value="RV/YV=1-101"/>
</dbReference>
<dbReference type="PDB" id="4V4P">
    <property type="method" value="X-ray"/>
    <property type="resolution" value="5.50 A"/>
    <property type="chains" value="2=1-101"/>
</dbReference>
<dbReference type="PDB" id="4V4X">
    <property type="method" value="X-ray"/>
    <property type="resolution" value="5.00 A"/>
    <property type="chains" value="BU=1-101"/>
</dbReference>
<dbReference type="PDB" id="4V4Y">
    <property type="method" value="X-ray"/>
    <property type="resolution" value="5.50 A"/>
    <property type="chains" value="BU=1-101"/>
</dbReference>
<dbReference type="PDB" id="4V4Z">
    <property type="method" value="X-ray"/>
    <property type="resolution" value="4.51 A"/>
    <property type="chains" value="BU=1-101"/>
</dbReference>
<dbReference type="PDB" id="4V51">
    <property type="method" value="X-ray"/>
    <property type="resolution" value="2.80 A"/>
    <property type="chains" value="BV/DV=1-101"/>
</dbReference>
<dbReference type="PDB" id="4V5A">
    <property type="method" value="X-ray"/>
    <property type="resolution" value="3.50 A"/>
    <property type="chains" value="BV/DV=1-101"/>
</dbReference>
<dbReference type="PDB" id="4V5C">
    <property type="method" value="X-ray"/>
    <property type="resolution" value="3.30 A"/>
    <property type="chains" value="BV/DV=1-101"/>
</dbReference>
<dbReference type="PDB" id="4V5D">
    <property type="method" value="X-ray"/>
    <property type="resolution" value="3.50 A"/>
    <property type="chains" value="BV/DV=1-101"/>
</dbReference>
<dbReference type="PDB" id="4V5E">
    <property type="method" value="X-ray"/>
    <property type="resolution" value="3.45 A"/>
    <property type="chains" value="BV/DV=1-101"/>
</dbReference>
<dbReference type="PDB" id="4V5F">
    <property type="method" value="X-ray"/>
    <property type="resolution" value="3.60 A"/>
    <property type="chains" value="BV/DV=1-101"/>
</dbReference>
<dbReference type="PDB" id="4V5G">
    <property type="method" value="X-ray"/>
    <property type="resolution" value="3.60 A"/>
    <property type="chains" value="BV/DV=1-101"/>
</dbReference>
<dbReference type="PDB" id="4V5J">
    <property type="method" value="X-ray"/>
    <property type="resolution" value="3.10 A"/>
    <property type="chains" value="BV/DV=1-101"/>
</dbReference>
<dbReference type="PDB" id="4V5K">
    <property type="method" value="X-ray"/>
    <property type="resolution" value="3.20 A"/>
    <property type="chains" value="BV/DV=1-101"/>
</dbReference>
<dbReference type="PDB" id="4V5L">
    <property type="method" value="X-ray"/>
    <property type="resolution" value="3.10 A"/>
    <property type="chains" value="BV=1-101"/>
</dbReference>
<dbReference type="PDB" id="4V5M">
    <property type="method" value="EM"/>
    <property type="resolution" value="7.80 A"/>
    <property type="chains" value="BV=1-101"/>
</dbReference>
<dbReference type="PDB" id="4V5N">
    <property type="method" value="EM"/>
    <property type="resolution" value="7.60 A"/>
    <property type="chains" value="BV=1-101"/>
</dbReference>
<dbReference type="PDB" id="4V5P">
    <property type="method" value="X-ray"/>
    <property type="resolution" value="3.10 A"/>
    <property type="chains" value="BV/DV=1-101"/>
</dbReference>
<dbReference type="PDB" id="4V5Q">
    <property type="method" value="X-ray"/>
    <property type="resolution" value="3.10 A"/>
    <property type="chains" value="BV/DV=1-101"/>
</dbReference>
<dbReference type="PDB" id="4V5R">
    <property type="method" value="X-ray"/>
    <property type="resolution" value="3.10 A"/>
    <property type="chains" value="BV/DV=1-101"/>
</dbReference>
<dbReference type="PDB" id="4V5S">
    <property type="method" value="X-ray"/>
    <property type="resolution" value="3.10 A"/>
    <property type="chains" value="BV/DV=1-101"/>
</dbReference>
<dbReference type="PDB" id="4V68">
    <property type="method" value="EM"/>
    <property type="resolution" value="6.40 A"/>
    <property type="chains" value="BV=1-101"/>
</dbReference>
<dbReference type="PDB" id="4V6A">
    <property type="method" value="X-ray"/>
    <property type="resolution" value="3.10 A"/>
    <property type="chains" value="BV/DV=1-101"/>
</dbReference>
<dbReference type="PDB" id="4V6F">
    <property type="method" value="X-ray"/>
    <property type="resolution" value="3.10 A"/>
    <property type="chains" value="A2/D2=1-101"/>
</dbReference>
<dbReference type="PDB" id="4V6G">
    <property type="method" value="X-ray"/>
    <property type="resolution" value="3.50 A"/>
    <property type="chains" value="B2/D2=1-101"/>
</dbReference>
<dbReference type="PDB" id="4V7J">
    <property type="method" value="X-ray"/>
    <property type="resolution" value="3.30 A"/>
    <property type="chains" value="AV/BV=1-101"/>
</dbReference>
<dbReference type="PDB" id="4V7K">
    <property type="method" value="X-ray"/>
    <property type="resolution" value="3.60 A"/>
    <property type="chains" value="AV/BV=1-101"/>
</dbReference>
<dbReference type="PDB" id="4V7L">
    <property type="method" value="X-ray"/>
    <property type="resolution" value="3.00 A"/>
    <property type="chains" value="BV/DV=1-101"/>
</dbReference>
<dbReference type="PDB" id="4V7M">
    <property type="method" value="X-ray"/>
    <property type="resolution" value="3.45 A"/>
    <property type="chains" value="BV/DV=1-101"/>
</dbReference>
<dbReference type="PDB" id="4V7W">
    <property type="method" value="X-ray"/>
    <property type="resolution" value="3.00 A"/>
    <property type="chains" value="BV/DV=1-101"/>
</dbReference>
<dbReference type="PDB" id="4V7X">
    <property type="method" value="X-ray"/>
    <property type="resolution" value="3.00 A"/>
    <property type="chains" value="BV/DV=1-101"/>
</dbReference>
<dbReference type="PDB" id="4V7Y">
    <property type="method" value="X-ray"/>
    <property type="resolution" value="3.00 A"/>
    <property type="chains" value="BV/DV=1-101"/>
</dbReference>
<dbReference type="PDB" id="4V7Z">
    <property type="method" value="X-ray"/>
    <property type="resolution" value="3.10 A"/>
    <property type="chains" value="BV/DV=1-101"/>
</dbReference>
<dbReference type="PDB" id="4V87">
    <property type="method" value="X-ray"/>
    <property type="resolution" value="3.10 A"/>
    <property type="chains" value="A2/D2=1-101"/>
</dbReference>
<dbReference type="PDB" id="4V8A">
    <property type="method" value="X-ray"/>
    <property type="resolution" value="3.20 A"/>
    <property type="chains" value="AV/BV=1-101"/>
</dbReference>
<dbReference type="PDB" id="4V8B">
    <property type="method" value="X-ray"/>
    <property type="resolution" value="3.00 A"/>
    <property type="chains" value="B2/D2=1-101"/>
</dbReference>
<dbReference type="PDB" id="4V8C">
    <property type="method" value="X-ray"/>
    <property type="resolution" value="3.30 A"/>
    <property type="chains" value="A2/B2=1-101"/>
</dbReference>
<dbReference type="PDB" id="4V8D">
    <property type="method" value="X-ray"/>
    <property type="resolution" value="3.00 A"/>
    <property type="chains" value="B2/D2=1-101"/>
</dbReference>
<dbReference type="PDB" id="4V8E">
    <property type="method" value="X-ray"/>
    <property type="resolution" value="3.30 A"/>
    <property type="chains" value="A2/C2=1-101"/>
</dbReference>
<dbReference type="PDB" id="4V8F">
    <property type="method" value="X-ray"/>
    <property type="resolution" value="3.30 A"/>
    <property type="chains" value="A2/D2=1-101"/>
</dbReference>
<dbReference type="PDB" id="4V8G">
    <property type="method" value="X-ray"/>
    <property type="resolution" value="3.00 A"/>
    <property type="chains" value="BV/DV=1-101"/>
</dbReference>
<dbReference type="PDB" id="4V8H">
    <property type="method" value="X-ray"/>
    <property type="resolution" value="3.10 A"/>
    <property type="chains" value="BV/DV=1-101"/>
</dbReference>
<dbReference type="PDB" id="4V8I">
    <property type="method" value="X-ray"/>
    <property type="resolution" value="2.70 A"/>
    <property type="chains" value="BV/DV=1-101"/>
</dbReference>
<dbReference type="PDB" id="4V8J">
    <property type="method" value="X-ray"/>
    <property type="resolution" value="3.90 A"/>
    <property type="chains" value="BV/DV=1-101"/>
</dbReference>
<dbReference type="PDB" id="4V8N">
    <property type="method" value="X-ray"/>
    <property type="resolution" value="3.10 A"/>
    <property type="chains" value="BV/DV=1-101"/>
</dbReference>
<dbReference type="PDB" id="4V8O">
    <property type="method" value="X-ray"/>
    <property type="resolution" value="3.80 A"/>
    <property type="chains" value="BV=1-101"/>
</dbReference>
<dbReference type="PDB" id="4V8Q">
    <property type="method" value="X-ray"/>
    <property type="resolution" value="3.10 A"/>
    <property type="chains" value="AV=1-101"/>
</dbReference>
<dbReference type="PDB" id="4V8U">
    <property type="method" value="X-ray"/>
    <property type="resolution" value="3.70 A"/>
    <property type="chains" value="BV/DV=1-101"/>
</dbReference>
<dbReference type="PDB" id="4V8X">
    <property type="method" value="X-ray"/>
    <property type="resolution" value="3.35 A"/>
    <property type="chains" value="BV/DV=1-101"/>
</dbReference>
<dbReference type="PDB" id="4V90">
    <property type="method" value="X-ray"/>
    <property type="resolution" value="2.95 A"/>
    <property type="chains" value="BV=1-101"/>
</dbReference>
<dbReference type="PDB" id="4V95">
    <property type="method" value="X-ray"/>
    <property type="resolution" value="3.20 A"/>
    <property type="chains" value="BV/DV=1-101"/>
</dbReference>
<dbReference type="PDB" id="4V97">
    <property type="method" value="X-ray"/>
    <property type="resolution" value="3.52 A"/>
    <property type="chains" value="BV/DV=1-101"/>
</dbReference>
<dbReference type="PDB" id="4V9A">
    <property type="method" value="X-ray"/>
    <property type="resolution" value="3.30 A"/>
    <property type="chains" value="B2/D2=1-101"/>
</dbReference>
<dbReference type="PDB" id="4V9B">
    <property type="method" value="X-ray"/>
    <property type="resolution" value="3.10 A"/>
    <property type="chains" value="B2/D2=1-101"/>
</dbReference>
<dbReference type="PDB" id="4V9H">
    <property type="method" value="X-ray"/>
    <property type="resolution" value="2.86 A"/>
    <property type="chains" value="BV=1-101"/>
</dbReference>
<dbReference type="PDB" id="4V9I">
    <property type="method" value="X-ray"/>
    <property type="resolution" value="3.30 A"/>
    <property type="chains" value="BV/DV=1-101"/>
</dbReference>
<dbReference type="PDB" id="4V9R">
    <property type="method" value="X-ray"/>
    <property type="resolution" value="3.00 A"/>
    <property type="chains" value="BV/DV=1-101"/>
</dbReference>
<dbReference type="PDB" id="4V9S">
    <property type="method" value="X-ray"/>
    <property type="resolution" value="3.10 A"/>
    <property type="chains" value="BV/DV=1-101"/>
</dbReference>
<dbReference type="PDB" id="4W2E">
    <property type="method" value="X-ray"/>
    <property type="resolution" value="2.90 A"/>
    <property type="chains" value="V=1-101"/>
</dbReference>
<dbReference type="PDB" id="4W2F">
    <property type="method" value="X-ray"/>
    <property type="resolution" value="2.40 A"/>
    <property type="chains" value="BV/DV=1-101"/>
</dbReference>
<dbReference type="PDB" id="4W2G">
    <property type="method" value="X-ray"/>
    <property type="resolution" value="2.55 A"/>
    <property type="chains" value="BV/DV=1-101"/>
</dbReference>
<dbReference type="PDB" id="4W2H">
    <property type="method" value="X-ray"/>
    <property type="resolution" value="2.70 A"/>
    <property type="chains" value="BV/DV=1-101"/>
</dbReference>
<dbReference type="PDB" id="4W2I">
    <property type="method" value="X-ray"/>
    <property type="resolution" value="2.70 A"/>
    <property type="chains" value="BV/DV=1-101"/>
</dbReference>
<dbReference type="PDB" id="4W4G">
    <property type="method" value="X-ray"/>
    <property type="resolution" value="3.30 A"/>
    <property type="chains" value="RV/YV=1-101"/>
</dbReference>
<dbReference type="PDB" id="4WPO">
    <property type="method" value="X-ray"/>
    <property type="resolution" value="2.80 A"/>
    <property type="chains" value="AV/CV=1-101"/>
</dbReference>
<dbReference type="PDB" id="4WQ1">
    <property type="method" value="X-ray"/>
    <property type="resolution" value="3.10 A"/>
    <property type="chains" value="95/D8=1-101"/>
</dbReference>
<dbReference type="PDB" id="4WQF">
    <property type="method" value="X-ray"/>
    <property type="resolution" value="2.80 A"/>
    <property type="chains" value="AV/CV=1-101"/>
</dbReference>
<dbReference type="PDB" id="4WQR">
    <property type="method" value="X-ray"/>
    <property type="resolution" value="3.15 A"/>
    <property type="chains" value="95/D8=1-101"/>
</dbReference>
<dbReference type="PDB" id="4WQU">
    <property type="method" value="X-ray"/>
    <property type="resolution" value="2.80 A"/>
    <property type="chains" value="AV/CV=1-101"/>
</dbReference>
<dbReference type="PDB" id="4WQY">
    <property type="method" value="X-ray"/>
    <property type="resolution" value="2.80 A"/>
    <property type="chains" value="AV/CV=1-101"/>
</dbReference>
<dbReference type="PDB" id="4WR6">
    <property type="method" value="X-ray"/>
    <property type="resolution" value="3.05 A"/>
    <property type="chains" value="95/D8=1-101"/>
</dbReference>
<dbReference type="PDB" id="4WRA">
    <property type="method" value="X-ray"/>
    <property type="resolution" value="3.05 A"/>
    <property type="chains" value="95/D8=1-101"/>
</dbReference>
<dbReference type="PDB" id="4WRO">
    <property type="method" value="X-ray"/>
    <property type="resolution" value="3.05 A"/>
    <property type="chains" value="D8=1-101"/>
</dbReference>
<dbReference type="PDB" id="4WSD">
    <property type="method" value="X-ray"/>
    <property type="resolution" value="2.95 A"/>
    <property type="chains" value="95/D8=1-101"/>
</dbReference>
<dbReference type="PDB" id="4WSM">
    <property type="method" value="X-ray"/>
    <property type="resolution" value="3.30 A"/>
    <property type="chains" value="95/D8=1-101"/>
</dbReference>
<dbReference type="PDB" id="4WT1">
    <property type="method" value="X-ray"/>
    <property type="resolution" value="3.05 A"/>
    <property type="chains" value="95/D8=1-101"/>
</dbReference>
<dbReference type="PDB" id="4WT8">
    <property type="method" value="X-ray"/>
    <property type="resolution" value="3.40 A"/>
    <property type="chains" value="CU/DU=1-101"/>
</dbReference>
<dbReference type="PDB" id="4WU1">
    <property type="method" value="X-ray"/>
    <property type="resolution" value="3.20 A"/>
    <property type="chains" value="95/D8=1-101"/>
</dbReference>
<dbReference type="PDB" id="4WZD">
    <property type="method" value="X-ray"/>
    <property type="resolution" value="3.10 A"/>
    <property type="chains" value="95/D8=1-101"/>
</dbReference>
<dbReference type="PDB" id="4WZO">
    <property type="method" value="X-ray"/>
    <property type="resolution" value="3.30 A"/>
    <property type="chains" value="95/D8=1-101"/>
</dbReference>
<dbReference type="PDB" id="4Y4O">
    <property type="method" value="X-ray"/>
    <property type="resolution" value="2.30 A"/>
    <property type="chains" value="1V/2V=1-101"/>
</dbReference>
<dbReference type="PDB" id="4Y4P">
    <property type="method" value="X-ray"/>
    <property type="resolution" value="2.50 A"/>
    <property type="chains" value="1V/2V=1-101"/>
</dbReference>
<dbReference type="PDB" id="4YPB">
    <property type="method" value="X-ray"/>
    <property type="resolution" value="3.40 A"/>
    <property type="chains" value="RV/YV=1-101"/>
</dbReference>
<dbReference type="PDB" id="4YZV">
    <property type="method" value="X-ray"/>
    <property type="resolution" value="3.10 A"/>
    <property type="chains" value="RV/YV=1-101"/>
</dbReference>
<dbReference type="PDB" id="4Z3S">
    <property type="method" value="X-ray"/>
    <property type="resolution" value="2.65 A"/>
    <property type="chains" value="1V/2V=1-101"/>
</dbReference>
<dbReference type="PDB" id="4Z8C">
    <property type="method" value="X-ray"/>
    <property type="resolution" value="2.90 A"/>
    <property type="chains" value="1V/2V=1-101"/>
</dbReference>
<dbReference type="PDB" id="4ZER">
    <property type="method" value="X-ray"/>
    <property type="resolution" value="3.10 A"/>
    <property type="chains" value="1V/2V=1-101"/>
</dbReference>
<dbReference type="PDB" id="4ZSN">
    <property type="method" value="X-ray"/>
    <property type="resolution" value="3.60 A"/>
    <property type="chains" value="RV/YV=1-101"/>
</dbReference>
<dbReference type="PDB" id="5A9Z">
    <property type="method" value="EM"/>
    <property type="resolution" value="4.70 A"/>
    <property type="chains" value="AS=1-101"/>
</dbReference>
<dbReference type="PDB" id="5AA0">
    <property type="method" value="EM"/>
    <property type="resolution" value="5.00 A"/>
    <property type="chains" value="AS=1-101"/>
</dbReference>
<dbReference type="PDB" id="5CZP">
    <property type="method" value="X-ray"/>
    <property type="resolution" value="3.30 A"/>
    <property type="chains" value="RV/YV=1-101"/>
</dbReference>
<dbReference type="PDB" id="5D8B">
    <property type="method" value="X-ray"/>
    <property type="resolution" value="3.63 A"/>
    <property type="chains" value="LB/P=1-101"/>
</dbReference>
<dbReference type="PDB" id="5DFE">
    <property type="method" value="X-ray"/>
    <property type="resolution" value="3.10 A"/>
    <property type="chains" value="RV/YV=1-101"/>
</dbReference>
<dbReference type="PDB" id="5DOX">
    <property type="method" value="X-ray"/>
    <property type="resolution" value="3.10 A"/>
    <property type="chains" value="1V/2V=1-101"/>
</dbReference>
<dbReference type="PDB" id="5DOY">
    <property type="method" value="X-ray"/>
    <property type="resolution" value="2.60 A"/>
    <property type="chains" value="1V/2V=1-101"/>
</dbReference>
<dbReference type="PDB" id="5E7K">
    <property type="method" value="X-ray"/>
    <property type="resolution" value="3.20 A"/>
    <property type="chains" value="95/D8=1-101"/>
</dbReference>
<dbReference type="PDB" id="5E81">
    <property type="method" value="X-ray"/>
    <property type="resolution" value="2.95 A"/>
    <property type="chains" value="95/D8=1-101"/>
</dbReference>
<dbReference type="PDB" id="5EL4">
    <property type="method" value="X-ray"/>
    <property type="resolution" value="3.15 A"/>
    <property type="chains" value="95/D8=1-101"/>
</dbReference>
<dbReference type="PDB" id="5EL5">
    <property type="method" value="X-ray"/>
    <property type="resolution" value="3.15 A"/>
    <property type="chains" value="95/D8=1-101"/>
</dbReference>
<dbReference type="PDB" id="5EL6">
    <property type="method" value="X-ray"/>
    <property type="resolution" value="3.10 A"/>
    <property type="chains" value="95/D8=1-101"/>
</dbReference>
<dbReference type="PDB" id="5EL7">
    <property type="method" value="X-ray"/>
    <property type="resolution" value="3.15 A"/>
    <property type="chains" value="95/D8=1-101"/>
</dbReference>
<dbReference type="PDB" id="5F8K">
    <property type="method" value="X-ray"/>
    <property type="resolution" value="2.80 A"/>
    <property type="chains" value="1V/2V=1-101"/>
</dbReference>
<dbReference type="PDB" id="5FDU">
    <property type="method" value="X-ray"/>
    <property type="resolution" value="2.90 A"/>
    <property type="chains" value="1V/2V=1-101"/>
</dbReference>
<dbReference type="PDB" id="5FDV">
    <property type="method" value="X-ray"/>
    <property type="resolution" value="2.80 A"/>
    <property type="chains" value="1V/2V=1-101"/>
</dbReference>
<dbReference type="PDB" id="5HAU">
    <property type="method" value="X-ray"/>
    <property type="resolution" value="3.00 A"/>
    <property type="chains" value="1T/2T=1-101"/>
</dbReference>
<dbReference type="PDB" id="5HCP">
    <property type="method" value="X-ray"/>
    <property type="resolution" value="2.89 A"/>
    <property type="chains" value="1V/2V=1-101"/>
</dbReference>
<dbReference type="PDB" id="5HCQ">
    <property type="method" value="X-ray"/>
    <property type="resolution" value="2.80 A"/>
    <property type="chains" value="1V/2V=1-101"/>
</dbReference>
<dbReference type="PDB" id="5HCR">
    <property type="method" value="X-ray"/>
    <property type="resolution" value="2.80 A"/>
    <property type="chains" value="1V/2V=1-101"/>
</dbReference>
<dbReference type="PDB" id="5HD1">
    <property type="method" value="X-ray"/>
    <property type="resolution" value="2.70 A"/>
    <property type="chains" value="1V/2V=1-101"/>
</dbReference>
<dbReference type="PDB" id="5IB7">
    <property type="method" value="X-ray"/>
    <property type="resolution" value="2.99 A"/>
    <property type="chains" value="95/D8=1-101"/>
</dbReference>
<dbReference type="PDB" id="5IB8">
    <property type="method" value="X-ray"/>
    <property type="resolution" value="3.13 A"/>
    <property type="chains" value="95/D8=1-101"/>
</dbReference>
<dbReference type="PDB" id="5IBB">
    <property type="method" value="X-ray"/>
    <property type="resolution" value="2.96 A"/>
    <property type="chains" value="95/D8=1-101"/>
</dbReference>
<dbReference type="PDB" id="5IMQ">
    <property type="method" value="EM"/>
    <property type="resolution" value="3.80 A"/>
    <property type="chains" value="n=1-101"/>
</dbReference>
<dbReference type="PDB" id="5IMR">
    <property type="method" value="EM"/>
    <property type="chains" value="n=1-101"/>
</dbReference>
<dbReference type="PDB" id="5J30">
    <property type="method" value="X-ray"/>
    <property type="resolution" value="3.20 A"/>
    <property type="chains" value="RV/YV=1-101"/>
</dbReference>
<dbReference type="PDB" id="5J3C">
    <property type="method" value="X-ray"/>
    <property type="resolution" value="3.04 A"/>
    <property type="chains" value="RV/YV=1-101"/>
</dbReference>
<dbReference type="PDB" id="5J4B">
    <property type="method" value="X-ray"/>
    <property type="resolution" value="2.60 A"/>
    <property type="chains" value="1V/2V=1-101"/>
</dbReference>
<dbReference type="PDB" id="5J4C">
    <property type="method" value="X-ray"/>
    <property type="resolution" value="2.80 A"/>
    <property type="chains" value="1V/2V=1-101"/>
</dbReference>
<dbReference type="PDB" id="5J8B">
    <property type="method" value="X-ray"/>
    <property type="resolution" value="2.60 A"/>
    <property type="chains" value="V=1-101"/>
</dbReference>
<dbReference type="PDB" id="5NDJ">
    <property type="method" value="X-ray"/>
    <property type="resolution" value="3.15 A"/>
    <property type="chains" value="95/D8=1-101"/>
</dbReference>
<dbReference type="PDB" id="5NDK">
    <property type="method" value="X-ray"/>
    <property type="resolution" value="2.95 A"/>
    <property type="chains" value="95/D8=1-101"/>
</dbReference>
<dbReference type="PDB" id="5OT7">
    <property type="method" value="EM"/>
    <property type="resolution" value="3.80 A"/>
    <property type="chains" value="w=1-101"/>
</dbReference>
<dbReference type="PDB" id="5UQ7">
    <property type="method" value="EM"/>
    <property type="resolution" value="3.50 A"/>
    <property type="chains" value="V=1-101"/>
</dbReference>
<dbReference type="PDB" id="5UQ8">
    <property type="method" value="EM"/>
    <property type="resolution" value="3.20 A"/>
    <property type="chains" value="V=1-101"/>
</dbReference>
<dbReference type="PDB" id="5VP2">
    <property type="method" value="X-ray"/>
    <property type="resolution" value="2.80 A"/>
    <property type="chains" value="1V/2V=1-101"/>
</dbReference>
<dbReference type="PDB" id="5VPO">
    <property type="method" value="X-ray"/>
    <property type="resolution" value="3.34 A"/>
    <property type="chains" value="RV/YV=1-101"/>
</dbReference>
<dbReference type="PDB" id="5VPP">
    <property type="method" value="X-ray"/>
    <property type="resolution" value="3.90 A"/>
    <property type="chains" value="RV/YV=1-101"/>
</dbReference>
<dbReference type="PDB" id="5W4K">
    <property type="method" value="X-ray"/>
    <property type="resolution" value="2.70 A"/>
    <property type="chains" value="1V/2V=1-101"/>
</dbReference>
<dbReference type="PDB" id="5WIS">
    <property type="method" value="X-ray"/>
    <property type="resolution" value="2.70 A"/>
    <property type="chains" value="1V/2V=1-101"/>
</dbReference>
<dbReference type="PDB" id="5WIT">
    <property type="method" value="X-ray"/>
    <property type="resolution" value="2.60 A"/>
    <property type="chains" value="1V/2V=1-101"/>
</dbReference>
<dbReference type="PDB" id="5ZLU">
    <property type="method" value="EM"/>
    <property type="resolution" value="3.60 A"/>
    <property type="chains" value="o=1-101"/>
</dbReference>
<dbReference type="PDB" id="6BUW">
    <property type="method" value="X-ray"/>
    <property type="resolution" value="3.50 A"/>
    <property type="chains" value="RV/YV=1-101"/>
</dbReference>
<dbReference type="PDB" id="6BZ6">
    <property type="method" value="X-ray"/>
    <property type="resolution" value="3.18 A"/>
    <property type="chains" value="RV/YV=1-101"/>
</dbReference>
<dbReference type="PDB" id="6BZ7">
    <property type="method" value="X-ray"/>
    <property type="resolution" value="3.68 A"/>
    <property type="chains" value="RV/YV=1-101"/>
</dbReference>
<dbReference type="PDB" id="6BZ8">
    <property type="method" value="X-ray"/>
    <property type="resolution" value="3.74 A"/>
    <property type="chains" value="RV/YV=1-101"/>
</dbReference>
<dbReference type="PDB" id="6C5L">
    <property type="method" value="X-ray"/>
    <property type="resolution" value="3.20 A"/>
    <property type="chains" value="BV/DV=1-101"/>
</dbReference>
<dbReference type="PDB" id="6CAE">
    <property type="method" value="X-ray"/>
    <property type="resolution" value="2.60 A"/>
    <property type="chains" value="1V/2V=1-101"/>
</dbReference>
<dbReference type="PDB" id="6CFJ">
    <property type="method" value="X-ray"/>
    <property type="resolution" value="2.80 A"/>
    <property type="chains" value="1V/2V=1-101"/>
</dbReference>
<dbReference type="PDB" id="6CFK">
    <property type="method" value="X-ray"/>
    <property type="resolution" value="2.70 A"/>
    <property type="chains" value="1V/2V=1-101"/>
</dbReference>
<dbReference type="PDB" id="6CFL">
    <property type="method" value="X-ray"/>
    <property type="resolution" value="2.60 A"/>
    <property type="chains" value="1V/2V=1-101"/>
</dbReference>
<dbReference type="PDB" id="6CZR">
    <property type="method" value="X-ray"/>
    <property type="resolution" value="3.14 A"/>
    <property type="chains" value="1V/2V=1-101"/>
</dbReference>
<dbReference type="PDB" id="6FKR">
    <property type="method" value="X-ray"/>
    <property type="resolution" value="3.20 A"/>
    <property type="chains" value="1V/2V=1-101"/>
</dbReference>
<dbReference type="PDB" id="6GSJ">
    <property type="method" value="X-ray"/>
    <property type="resolution" value="2.96 A"/>
    <property type="chains" value="95/D8=1-101"/>
</dbReference>
<dbReference type="PDB" id="6GSK">
    <property type="method" value="X-ray"/>
    <property type="resolution" value="3.36 A"/>
    <property type="chains" value="95/D8=1-101"/>
</dbReference>
<dbReference type="PDB" id="6GSL">
    <property type="method" value="X-ray"/>
    <property type="resolution" value="3.16 A"/>
    <property type="chains" value="95/D8=1-101"/>
</dbReference>
<dbReference type="PDB" id="6GZQ">
    <property type="method" value="EM"/>
    <property type="resolution" value="3.28 A"/>
    <property type="chains" value="Q1=1-101"/>
</dbReference>
<dbReference type="PDB" id="6GZX">
    <property type="method" value="EM"/>
    <property type="resolution" value="4.57 A"/>
    <property type="chains" value="Q1/Q2=1-101"/>
</dbReference>
<dbReference type="PDB" id="6GZZ">
    <property type="method" value="EM"/>
    <property type="resolution" value="4.13 A"/>
    <property type="chains" value="Q1/Q2=1-101"/>
</dbReference>
<dbReference type="PDB" id="6N9E">
    <property type="method" value="X-ray"/>
    <property type="resolution" value="3.70 A"/>
    <property type="chains" value="1V/2V=1-101"/>
</dbReference>
<dbReference type="PDB" id="6N9F">
    <property type="method" value="X-ray"/>
    <property type="resolution" value="3.70 A"/>
    <property type="chains" value="1V/2V=1-101"/>
</dbReference>
<dbReference type="PDB" id="6ND5">
    <property type="method" value="X-ray"/>
    <property type="resolution" value="2.60 A"/>
    <property type="chains" value="1V/2V=1-101"/>
</dbReference>
<dbReference type="PDB" id="6ND6">
    <property type="method" value="X-ray"/>
    <property type="resolution" value="2.85 A"/>
    <property type="chains" value="1V/2V=1-101"/>
</dbReference>
<dbReference type="PDB" id="6NDK">
    <property type="method" value="X-ray"/>
    <property type="resolution" value="3.64 A"/>
    <property type="chains" value="RV/YV=1-101"/>
</dbReference>
<dbReference type="PDB" id="6NSH">
    <property type="method" value="X-ray"/>
    <property type="resolution" value="3.40 A"/>
    <property type="chains" value="RV/YV=1-101"/>
</dbReference>
<dbReference type="PDB" id="6NTA">
    <property type="method" value="X-ray"/>
    <property type="resolution" value="3.10 A"/>
    <property type="chains" value="RV/YV=1-101"/>
</dbReference>
<dbReference type="PDB" id="6NUO">
    <property type="method" value="X-ray"/>
    <property type="resolution" value="3.20 A"/>
    <property type="chains" value="RV/YV=1-101"/>
</dbReference>
<dbReference type="PDB" id="6NWY">
    <property type="method" value="X-ray"/>
    <property type="resolution" value="3.50 A"/>
    <property type="chains" value="RV/YV=1-101"/>
</dbReference>
<dbReference type="PDB" id="6O3M">
    <property type="method" value="X-ray"/>
    <property type="resolution" value="3.97 A"/>
    <property type="chains" value="RV/YV=1-101"/>
</dbReference>
<dbReference type="PDB" id="6O97">
    <property type="method" value="X-ray"/>
    <property type="resolution" value="2.75 A"/>
    <property type="chains" value="1V/2V=1-101"/>
</dbReference>
<dbReference type="PDB" id="6OF1">
    <property type="method" value="X-ray"/>
    <property type="resolution" value="2.80 A"/>
    <property type="chains" value="1V/2V=1-101"/>
</dbReference>
<dbReference type="PDB" id="6OF6">
    <property type="method" value="X-ray"/>
    <property type="resolution" value="3.20 A"/>
    <property type="chains" value="RV/YV=1-101"/>
</dbReference>
<dbReference type="PDB" id="6OJ2">
    <property type="method" value="X-ray"/>
    <property type="resolution" value="3.20 A"/>
    <property type="chains" value="RV/YV=1-101"/>
</dbReference>
<dbReference type="PDB" id="6OPE">
    <property type="method" value="X-ray"/>
    <property type="resolution" value="3.10 A"/>
    <property type="chains" value="RV/YV=1-101"/>
</dbReference>
<dbReference type="PDB" id="6ORD">
    <property type="method" value="X-ray"/>
    <property type="resolution" value="3.10 A"/>
    <property type="chains" value="RV/YV=1-101"/>
</dbReference>
<dbReference type="PDB" id="6OSI">
    <property type="method" value="X-ray"/>
    <property type="resolution" value="4.14 A"/>
    <property type="chains" value="RV/YV=1-101"/>
</dbReference>
<dbReference type="PDB" id="6OTR">
    <property type="method" value="X-ray"/>
    <property type="resolution" value="3.12 A"/>
    <property type="chains" value="RV/YV=1-101"/>
</dbReference>
<dbReference type="PDB" id="6OXA">
    <property type="method" value="X-ray"/>
    <property type="resolution" value="3.25 A"/>
    <property type="chains" value="RV/YV=1-101"/>
</dbReference>
<dbReference type="PDB" id="6OXI">
    <property type="method" value="X-ray"/>
    <property type="resolution" value="3.50 A"/>
    <property type="chains" value="RV/YV=1-101"/>
</dbReference>
<dbReference type="PDB" id="6Q95">
    <property type="method" value="EM"/>
    <property type="resolution" value="3.70 A"/>
    <property type="chains" value="R=1-101"/>
</dbReference>
<dbReference type="PDB" id="6QNQ">
    <property type="method" value="X-ray"/>
    <property type="resolution" value="3.50 A"/>
    <property type="chains" value="95/D8=1-101"/>
</dbReference>
<dbReference type="PDB" id="6QNR">
    <property type="method" value="X-ray"/>
    <property type="resolution" value="3.10 A"/>
    <property type="chains" value="95/D8=1-101"/>
</dbReference>
<dbReference type="PDB" id="6UCQ">
    <property type="method" value="X-ray"/>
    <property type="resolution" value="3.50 A"/>
    <property type="chains" value="1V/2V=1-101"/>
</dbReference>
<dbReference type="PDB" id="6UO1">
    <property type="method" value="X-ray"/>
    <property type="resolution" value="2.95 A"/>
    <property type="chains" value="1V/2V=1-101"/>
</dbReference>
<dbReference type="PDB" id="6XHV">
    <property type="method" value="X-ray"/>
    <property type="resolution" value="2.40 A"/>
    <property type="chains" value="1V/2V=1-101"/>
</dbReference>
<dbReference type="PDB" id="6XHW">
    <property type="method" value="X-ray"/>
    <property type="resolution" value="2.50 A"/>
    <property type="chains" value="1V/2V=1-101"/>
</dbReference>
<dbReference type="PDB" id="6XHX">
    <property type="method" value="X-ray"/>
    <property type="resolution" value="2.55 A"/>
    <property type="chains" value="1V/2V=1-101"/>
</dbReference>
<dbReference type="PDB" id="6XHY">
    <property type="method" value="X-ray"/>
    <property type="resolution" value="2.60 A"/>
    <property type="chains" value="1V/2V=1-101"/>
</dbReference>
<dbReference type="PDB" id="6XQD">
    <property type="method" value="X-ray"/>
    <property type="resolution" value="2.80 A"/>
    <property type="chains" value="1V/2V=1-101"/>
</dbReference>
<dbReference type="PDB" id="6XQE">
    <property type="method" value="X-ray"/>
    <property type="resolution" value="3.00 A"/>
    <property type="chains" value="1V/2V=1-101"/>
</dbReference>
<dbReference type="PDB" id="7AZO">
    <property type="method" value="X-ray"/>
    <property type="resolution" value="3.30 A"/>
    <property type="chains" value="L21A/L21B=1-101"/>
</dbReference>
<dbReference type="PDB" id="7AZS">
    <property type="method" value="X-ray"/>
    <property type="resolution" value="3.10 A"/>
    <property type="chains" value="L21A/L21B=1-101"/>
</dbReference>
<dbReference type="PDB" id="7JQL">
    <property type="method" value="X-ray"/>
    <property type="resolution" value="3.00 A"/>
    <property type="chains" value="1V/2V=1-101"/>
</dbReference>
<dbReference type="PDB" id="7JQM">
    <property type="method" value="X-ray"/>
    <property type="resolution" value="3.05 A"/>
    <property type="chains" value="1V/2V=1-101"/>
</dbReference>
<dbReference type="PDB" id="7LH5">
    <property type="method" value="X-ray"/>
    <property type="resolution" value="3.27 A"/>
    <property type="chains" value="BV/DV=1-101"/>
</dbReference>
<dbReference type="PDB" id="7MD7">
    <property type="method" value="X-ray"/>
    <property type="resolution" value="2.80 A"/>
    <property type="chains" value="1V/2V=1-101"/>
</dbReference>
<dbReference type="PDB" id="7RQ8">
    <property type="method" value="X-ray"/>
    <property type="resolution" value="2.50 A"/>
    <property type="chains" value="1V/2V=1-101"/>
</dbReference>
<dbReference type="PDB" id="7RQ9">
    <property type="method" value="X-ray"/>
    <property type="resolution" value="2.60 A"/>
    <property type="chains" value="1V/2V=1-101"/>
</dbReference>
<dbReference type="PDB" id="7RQA">
    <property type="method" value="X-ray"/>
    <property type="resolution" value="2.40 A"/>
    <property type="chains" value="1V/2V=1-101"/>
</dbReference>
<dbReference type="PDB" id="7RQB">
    <property type="method" value="X-ray"/>
    <property type="resolution" value="2.45 A"/>
    <property type="chains" value="1V/2V=1-101"/>
</dbReference>
<dbReference type="PDB" id="7RQC">
    <property type="method" value="X-ray"/>
    <property type="resolution" value="2.50 A"/>
    <property type="chains" value="1V/2V=1-101"/>
</dbReference>
<dbReference type="PDB" id="7RQD">
    <property type="method" value="X-ray"/>
    <property type="resolution" value="2.50 A"/>
    <property type="chains" value="1V/2V=1-101"/>
</dbReference>
<dbReference type="PDB" id="7RQE">
    <property type="method" value="X-ray"/>
    <property type="resolution" value="2.40 A"/>
    <property type="chains" value="1V/2V=1-101"/>
</dbReference>
<dbReference type="PDB" id="7U2H">
    <property type="method" value="X-ray"/>
    <property type="resolution" value="2.55 A"/>
    <property type="chains" value="1V/2V=1-101"/>
</dbReference>
<dbReference type="PDB" id="7U2I">
    <property type="method" value="X-ray"/>
    <property type="resolution" value="2.55 A"/>
    <property type="chains" value="1V/2V=1-101"/>
</dbReference>
<dbReference type="PDB" id="7U2J">
    <property type="method" value="X-ray"/>
    <property type="resolution" value="2.55 A"/>
    <property type="chains" value="1V/2V=1-101"/>
</dbReference>
<dbReference type="PDB" id="8CVJ">
    <property type="method" value="X-ray"/>
    <property type="resolution" value="2.40 A"/>
    <property type="chains" value="1V/2V=1-101"/>
</dbReference>
<dbReference type="PDB" id="8CVK">
    <property type="method" value="X-ray"/>
    <property type="resolution" value="2.50 A"/>
    <property type="chains" value="1V/2V=1-101"/>
</dbReference>
<dbReference type="PDB" id="8CVL">
    <property type="method" value="X-ray"/>
    <property type="resolution" value="2.30 A"/>
    <property type="chains" value="1V/2V=1-101"/>
</dbReference>
<dbReference type="PDB" id="8EKB">
    <property type="method" value="X-ray"/>
    <property type="resolution" value="2.70 A"/>
    <property type="chains" value="1V/2V=1-101"/>
</dbReference>
<dbReference type="PDB" id="8EV6">
    <property type="method" value="X-ray"/>
    <property type="resolution" value="2.95 A"/>
    <property type="chains" value="1V/2V=1-101"/>
</dbReference>
<dbReference type="PDB" id="8EV7">
    <property type="method" value="X-ray"/>
    <property type="resolution" value="2.89 A"/>
    <property type="chains" value="1V/2V=1-101"/>
</dbReference>
<dbReference type="PDB" id="8FC1">
    <property type="method" value="X-ray"/>
    <property type="resolution" value="2.50 A"/>
    <property type="chains" value="1V/2V=1-101"/>
</dbReference>
<dbReference type="PDB" id="8FC2">
    <property type="method" value="X-ray"/>
    <property type="resolution" value="2.50 A"/>
    <property type="chains" value="1V/2V=1-101"/>
</dbReference>
<dbReference type="PDB" id="8FC3">
    <property type="method" value="X-ray"/>
    <property type="resolution" value="2.60 A"/>
    <property type="chains" value="1V/2V=1-101"/>
</dbReference>
<dbReference type="PDB" id="8FC4">
    <property type="method" value="X-ray"/>
    <property type="resolution" value="2.45 A"/>
    <property type="chains" value="1V/2V=1-101"/>
</dbReference>
<dbReference type="PDB" id="8FC5">
    <property type="method" value="X-ray"/>
    <property type="resolution" value="2.65 A"/>
    <property type="chains" value="1V/2V=1-101"/>
</dbReference>
<dbReference type="PDB" id="8FC6">
    <property type="method" value="X-ray"/>
    <property type="resolution" value="2.35 A"/>
    <property type="chains" value="1V/2V=1-101"/>
</dbReference>
<dbReference type="PDB" id="8FOM">
    <property type="method" value="X-ray"/>
    <property type="resolution" value="3.58 A"/>
    <property type="chains" value="RV/YV=1-101"/>
</dbReference>
<dbReference type="PDB" id="8FON">
    <property type="method" value="X-ray"/>
    <property type="resolution" value="3.64 A"/>
    <property type="chains" value="RV/YV=1-101"/>
</dbReference>
<dbReference type="PDB" id="8G29">
    <property type="method" value="X-ray"/>
    <property type="resolution" value="2.55 A"/>
    <property type="chains" value="1V/2V=1-101"/>
</dbReference>
<dbReference type="PDB" id="8G2A">
    <property type="method" value="X-ray"/>
    <property type="resolution" value="2.45 A"/>
    <property type="chains" value="1V/2V=1-101"/>
</dbReference>
<dbReference type="PDB" id="8G2B">
    <property type="method" value="X-ray"/>
    <property type="resolution" value="2.55 A"/>
    <property type="chains" value="1V/2V=1-101"/>
</dbReference>
<dbReference type="PDB" id="8G2C">
    <property type="method" value="X-ray"/>
    <property type="resolution" value="2.65 A"/>
    <property type="chains" value="1V/2V=1-101"/>
</dbReference>
<dbReference type="PDB" id="8G2D">
    <property type="method" value="X-ray"/>
    <property type="resolution" value="2.70 A"/>
    <property type="chains" value="1V/2V=1-101"/>
</dbReference>
<dbReference type="PDB" id="8T8B">
    <property type="method" value="X-ray"/>
    <property type="resolution" value="2.65 A"/>
    <property type="chains" value="1V/2V=1-101"/>
</dbReference>
<dbReference type="PDB" id="8T8C">
    <property type="method" value="X-ray"/>
    <property type="resolution" value="2.60 A"/>
    <property type="chains" value="1V/2V=1-101"/>
</dbReference>
<dbReference type="PDB" id="8UD6">
    <property type="method" value="X-ray"/>
    <property type="resolution" value="2.70 A"/>
    <property type="chains" value="1V/2V=1-101"/>
</dbReference>
<dbReference type="PDB" id="8UD7">
    <property type="method" value="X-ray"/>
    <property type="resolution" value="2.55 A"/>
    <property type="chains" value="1V/2V=1-101"/>
</dbReference>
<dbReference type="PDB" id="8UD8">
    <property type="method" value="X-ray"/>
    <property type="resolution" value="2.60 A"/>
    <property type="chains" value="1V/2V=1-101"/>
</dbReference>
<dbReference type="PDB" id="8UVR">
    <property type="method" value="X-ray"/>
    <property type="resolution" value="2.60 A"/>
    <property type="chains" value="1V/2V=1-101"/>
</dbReference>
<dbReference type="PDB" id="8UVS">
    <property type="method" value="X-ray"/>
    <property type="resolution" value="2.75 A"/>
    <property type="chains" value="1V/2V=1-101"/>
</dbReference>
<dbReference type="PDB" id="8VTU">
    <property type="method" value="X-ray"/>
    <property type="resolution" value="2.40 A"/>
    <property type="chains" value="1V/2V=1-101"/>
</dbReference>
<dbReference type="PDB" id="8VTV">
    <property type="method" value="X-ray"/>
    <property type="resolution" value="2.55 A"/>
    <property type="chains" value="1V/2V=1-101"/>
</dbReference>
<dbReference type="PDB" id="8VTW">
    <property type="method" value="X-ray"/>
    <property type="resolution" value="2.35 A"/>
    <property type="chains" value="1V/2V=1-101"/>
</dbReference>
<dbReference type="PDB" id="8VTX">
    <property type="method" value="X-ray"/>
    <property type="resolution" value="2.40 A"/>
    <property type="chains" value="1V/2V=1-101"/>
</dbReference>
<dbReference type="PDB" id="8VTY">
    <property type="method" value="X-ray"/>
    <property type="resolution" value="2.60 A"/>
    <property type="chains" value="1V/2V=1-101"/>
</dbReference>
<dbReference type="PDB" id="8WV1">
    <property type="method" value="X-ray"/>
    <property type="resolution" value="3.99 A"/>
    <property type="chains" value="Q/q=1-101"/>
</dbReference>
<dbReference type="PDB" id="9B00">
    <property type="method" value="X-ray"/>
    <property type="resolution" value="2.80 A"/>
    <property type="chains" value="1V/2V=1-101"/>
</dbReference>
<dbReference type="PDB" id="9D0J">
    <property type="method" value="X-ray"/>
    <property type="resolution" value="2.50 A"/>
    <property type="chains" value="1V/2V=1-101"/>
</dbReference>
<dbReference type="PDB" id="9D7R">
    <property type="method" value="X-ray"/>
    <property type="resolution" value="2.70 A"/>
    <property type="chains" value="1V/2V=1-101"/>
</dbReference>
<dbReference type="PDB" id="9D7S">
    <property type="method" value="X-ray"/>
    <property type="resolution" value="2.85 A"/>
    <property type="chains" value="1V/2V=1-101"/>
</dbReference>
<dbReference type="PDB" id="9D7T">
    <property type="method" value="X-ray"/>
    <property type="resolution" value="2.70 A"/>
    <property type="chains" value="1V/2V=1-101"/>
</dbReference>
<dbReference type="PDB" id="9DFC">
    <property type="method" value="X-ray"/>
    <property type="resolution" value="2.50 A"/>
    <property type="chains" value="1V/2V=1-101"/>
</dbReference>
<dbReference type="PDB" id="9DFD">
    <property type="method" value="X-ray"/>
    <property type="resolution" value="2.60 A"/>
    <property type="chains" value="1V/2V=1-101"/>
</dbReference>
<dbReference type="PDB" id="9DFE">
    <property type="method" value="X-ray"/>
    <property type="resolution" value="2.60 A"/>
    <property type="chains" value="1V/2V=1-101"/>
</dbReference>
<dbReference type="PDBsum" id="1VVJ"/>
<dbReference type="PDBsum" id="1VY4"/>
<dbReference type="PDBsum" id="1VY5"/>
<dbReference type="PDBsum" id="1VY6"/>
<dbReference type="PDBsum" id="1VY7"/>
<dbReference type="PDBsum" id="4L47"/>
<dbReference type="PDBsum" id="4L71"/>
<dbReference type="PDBsum" id="4LEL"/>
<dbReference type="PDBsum" id="4LFZ"/>
<dbReference type="PDBsum" id="4LNT"/>
<dbReference type="PDBsum" id="4LSK"/>
<dbReference type="PDBsum" id="4LT8"/>
<dbReference type="PDBsum" id="4P6F"/>
<dbReference type="PDBsum" id="4P70"/>
<dbReference type="PDBsum" id="4TUA"/>
<dbReference type="PDBsum" id="4TUB"/>
<dbReference type="PDBsum" id="4TUC"/>
<dbReference type="PDBsum" id="4TUD"/>
<dbReference type="PDBsum" id="4TUE"/>
<dbReference type="PDBsum" id="4V4P"/>
<dbReference type="PDBsum" id="4V4X"/>
<dbReference type="PDBsum" id="4V4Y"/>
<dbReference type="PDBsum" id="4V4Z"/>
<dbReference type="PDBsum" id="4V51"/>
<dbReference type="PDBsum" id="4V5A"/>
<dbReference type="PDBsum" id="4V5C"/>
<dbReference type="PDBsum" id="4V5D"/>
<dbReference type="PDBsum" id="4V5E"/>
<dbReference type="PDBsum" id="4V5F"/>
<dbReference type="PDBsum" id="4V5G"/>
<dbReference type="PDBsum" id="4V5J"/>
<dbReference type="PDBsum" id="4V5K"/>
<dbReference type="PDBsum" id="4V5L"/>
<dbReference type="PDBsum" id="4V5M"/>
<dbReference type="PDBsum" id="4V5N"/>
<dbReference type="PDBsum" id="4V5P"/>
<dbReference type="PDBsum" id="4V5Q"/>
<dbReference type="PDBsum" id="4V5R"/>
<dbReference type="PDBsum" id="4V5S"/>
<dbReference type="PDBsum" id="4V68"/>
<dbReference type="PDBsum" id="4V6A"/>
<dbReference type="PDBsum" id="4V6F"/>
<dbReference type="PDBsum" id="4V6G"/>
<dbReference type="PDBsum" id="4V7J"/>
<dbReference type="PDBsum" id="4V7K"/>
<dbReference type="PDBsum" id="4V7L"/>
<dbReference type="PDBsum" id="4V7M"/>
<dbReference type="PDBsum" id="4V7W"/>
<dbReference type="PDBsum" id="4V7X"/>
<dbReference type="PDBsum" id="4V7Y"/>
<dbReference type="PDBsum" id="4V7Z"/>
<dbReference type="PDBsum" id="4V87"/>
<dbReference type="PDBsum" id="4V8A"/>
<dbReference type="PDBsum" id="4V8B"/>
<dbReference type="PDBsum" id="4V8C"/>
<dbReference type="PDBsum" id="4V8D"/>
<dbReference type="PDBsum" id="4V8E"/>
<dbReference type="PDBsum" id="4V8F"/>
<dbReference type="PDBsum" id="4V8G"/>
<dbReference type="PDBsum" id="4V8H"/>
<dbReference type="PDBsum" id="4V8I"/>
<dbReference type="PDBsum" id="4V8J"/>
<dbReference type="PDBsum" id="4V8N"/>
<dbReference type="PDBsum" id="4V8O"/>
<dbReference type="PDBsum" id="4V8Q"/>
<dbReference type="PDBsum" id="4V8U"/>
<dbReference type="PDBsum" id="4V8X"/>
<dbReference type="PDBsum" id="4V90"/>
<dbReference type="PDBsum" id="4V95"/>
<dbReference type="PDBsum" id="4V97"/>
<dbReference type="PDBsum" id="4V9A"/>
<dbReference type="PDBsum" id="4V9B"/>
<dbReference type="PDBsum" id="4V9H"/>
<dbReference type="PDBsum" id="4V9I"/>
<dbReference type="PDBsum" id="4V9R"/>
<dbReference type="PDBsum" id="4V9S"/>
<dbReference type="PDBsum" id="4W2E"/>
<dbReference type="PDBsum" id="4W2F"/>
<dbReference type="PDBsum" id="4W2G"/>
<dbReference type="PDBsum" id="4W2H"/>
<dbReference type="PDBsum" id="4W2I"/>
<dbReference type="PDBsum" id="4W4G"/>
<dbReference type="PDBsum" id="4WPO"/>
<dbReference type="PDBsum" id="4WQ1"/>
<dbReference type="PDBsum" id="4WQF"/>
<dbReference type="PDBsum" id="4WQR"/>
<dbReference type="PDBsum" id="4WQU"/>
<dbReference type="PDBsum" id="4WQY"/>
<dbReference type="PDBsum" id="4WR6"/>
<dbReference type="PDBsum" id="4WRA"/>
<dbReference type="PDBsum" id="4WRO"/>
<dbReference type="PDBsum" id="4WSD"/>
<dbReference type="PDBsum" id="4WSM"/>
<dbReference type="PDBsum" id="4WT1"/>
<dbReference type="PDBsum" id="4WT8"/>
<dbReference type="PDBsum" id="4WU1"/>
<dbReference type="PDBsum" id="4WZD"/>
<dbReference type="PDBsum" id="4WZO"/>
<dbReference type="PDBsum" id="4Y4O"/>
<dbReference type="PDBsum" id="4Y4P"/>
<dbReference type="PDBsum" id="4YPB"/>
<dbReference type="PDBsum" id="4YZV"/>
<dbReference type="PDBsum" id="4Z3S"/>
<dbReference type="PDBsum" id="4Z8C"/>
<dbReference type="PDBsum" id="4ZER"/>
<dbReference type="PDBsum" id="4ZSN"/>
<dbReference type="PDBsum" id="5A9Z"/>
<dbReference type="PDBsum" id="5AA0"/>
<dbReference type="PDBsum" id="5CZP"/>
<dbReference type="PDBsum" id="5D8B"/>
<dbReference type="PDBsum" id="5DFE"/>
<dbReference type="PDBsum" id="5DOX"/>
<dbReference type="PDBsum" id="5DOY"/>
<dbReference type="PDBsum" id="5E7K"/>
<dbReference type="PDBsum" id="5E81"/>
<dbReference type="PDBsum" id="5EL4"/>
<dbReference type="PDBsum" id="5EL5"/>
<dbReference type="PDBsum" id="5EL6"/>
<dbReference type="PDBsum" id="5EL7"/>
<dbReference type="PDBsum" id="5F8K"/>
<dbReference type="PDBsum" id="5FDU"/>
<dbReference type="PDBsum" id="5FDV"/>
<dbReference type="PDBsum" id="5HAU"/>
<dbReference type="PDBsum" id="5HCP"/>
<dbReference type="PDBsum" id="5HCQ"/>
<dbReference type="PDBsum" id="5HCR"/>
<dbReference type="PDBsum" id="5HD1"/>
<dbReference type="PDBsum" id="5IB7"/>
<dbReference type="PDBsum" id="5IB8"/>
<dbReference type="PDBsum" id="5IBB"/>
<dbReference type="PDBsum" id="5IMQ"/>
<dbReference type="PDBsum" id="5IMR"/>
<dbReference type="PDBsum" id="5J30"/>
<dbReference type="PDBsum" id="5J3C"/>
<dbReference type="PDBsum" id="5J4B"/>
<dbReference type="PDBsum" id="5J4C"/>
<dbReference type="PDBsum" id="5J8B"/>
<dbReference type="PDBsum" id="5NDJ"/>
<dbReference type="PDBsum" id="5NDK"/>
<dbReference type="PDBsum" id="5OT7"/>
<dbReference type="PDBsum" id="5UQ7"/>
<dbReference type="PDBsum" id="5UQ8"/>
<dbReference type="PDBsum" id="5VP2"/>
<dbReference type="PDBsum" id="5VPO"/>
<dbReference type="PDBsum" id="5VPP"/>
<dbReference type="PDBsum" id="5W4K"/>
<dbReference type="PDBsum" id="5WIS"/>
<dbReference type="PDBsum" id="5WIT"/>
<dbReference type="PDBsum" id="5ZLU"/>
<dbReference type="PDBsum" id="6BUW"/>
<dbReference type="PDBsum" id="6BZ6"/>
<dbReference type="PDBsum" id="6BZ7"/>
<dbReference type="PDBsum" id="6BZ8"/>
<dbReference type="PDBsum" id="6C5L"/>
<dbReference type="PDBsum" id="6CAE"/>
<dbReference type="PDBsum" id="6CFJ"/>
<dbReference type="PDBsum" id="6CFK"/>
<dbReference type="PDBsum" id="6CFL"/>
<dbReference type="PDBsum" id="6CZR"/>
<dbReference type="PDBsum" id="6FKR"/>
<dbReference type="PDBsum" id="6GSJ"/>
<dbReference type="PDBsum" id="6GSK"/>
<dbReference type="PDBsum" id="6GSL"/>
<dbReference type="PDBsum" id="6GZQ"/>
<dbReference type="PDBsum" id="6GZX"/>
<dbReference type="PDBsum" id="6GZZ"/>
<dbReference type="PDBsum" id="6N9E"/>
<dbReference type="PDBsum" id="6N9F"/>
<dbReference type="PDBsum" id="6ND5"/>
<dbReference type="PDBsum" id="6ND6"/>
<dbReference type="PDBsum" id="6NDK"/>
<dbReference type="PDBsum" id="6NSH"/>
<dbReference type="PDBsum" id="6NTA"/>
<dbReference type="PDBsum" id="6NUO"/>
<dbReference type="PDBsum" id="6NWY"/>
<dbReference type="PDBsum" id="6O3M"/>
<dbReference type="PDBsum" id="6O97"/>
<dbReference type="PDBsum" id="6OF1"/>
<dbReference type="PDBsum" id="6OF6"/>
<dbReference type="PDBsum" id="6OJ2"/>
<dbReference type="PDBsum" id="6OPE"/>
<dbReference type="PDBsum" id="6ORD"/>
<dbReference type="PDBsum" id="6OSI"/>
<dbReference type="PDBsum" id="6OTR"/>
<dbReference type="PDBsum" id="6OXA"/>
<dbReference type="PDBsum" id="6OXI"/>
<dbReference type="PDBsum" id="6Q95"/>
<dbReference type="PDBsum" id="6QNQ"/>
<dbReference type="PDBsum" id="6QNR"/>
<dbReference type="PDBsum" id="6UCQ"/>
<dbReference type="PDBsum" id="6UO1"/>
<dbReference type="PDBsum" id="6XHV"/>
<dbReference type="PDBsum" id="6XHW"/>
<dbReference type="PDBsum" id="6XHX"/>
<dbReference type="PDBsum" id="6XHY"/>
<dbReference type="PDBsum" id="6XQD"/>
<dbReference type="PDBsum" id="6XQE"/>
<dbReference type="PDBsum" id="7AZO"/>
<dbReference type="PDBsum" id="7AZS"/>
<dbReference type="PDBsum" id="7JQL"/>
<dbReference type="PDBsum" id="7JQM"/>
<dbReference type="PDBsum" id="7LH5"/>
<dbReference type="PDBsum" id="7MD7"/>
<dbReference type="PDBsum" id="7RQ8"/>
<dbReference type="PDBsum" id="7RQ9"/>
<dbReference type="PDBsum" id="7RQA"/>
<dbReference type="PDBsum" id="7RQB"/>
<dbReference type="PDBsum" id="7RQC"/>
<dbReference type="PDBsum" id="7RQD"/>
<dbReference type="PDBsum" id="7RQE"/>
<dbReference type="PDBsum" id="7U2H"/>
<dbReference type="PDBsum" id="7U2I"/>
<dbReference type="PDBsum" id="7U2J"/>
<dbReference type="PDBsum" id="8CVJ"/>
<dbReference type="PDBsum" id="8CVK"/>
<dbReference type="PDBsum" id="8CVL"/>
<dbReference type="PDBsum" id="8EKB"/>
<dbReference type="PDBsum" id="8EV6"/>
<dbReference type="PDBsum" id="8EV7"/>
<dbReference type="PDBsum" id="8FC1"/>
<dbReference type="PDBsum" id="8FC2"/>
<dbReference type="PDBsum" id="8FC3"/>
<dbReference type="PDBsum" id="8FC4"/>
<dbReference type="PDBsum" id="8FC5"/>
<dbReference type="PDBsum" id="8FC6"/>
<dbReference type="PDBsum" id="8FOM"/>
<dbReference type="PDBsum" id="8FON"/>
<dbReference type="PDBsum" id="8G29"/>
<dbReference type="PDBsum" id="8G2A"/>
<dbReference type="PDBsum" id="8G2B"/>
<dbReference type="PDBsum" id="8G2C"/>
<dbReference type="PDBsum" id="8G2D"/>
<dbReference type="PDBsum" id="8T8B"/>
<dbReference type="PDBsum" id="8T8C"/>
<dbReference type="PDBsum" id="8UD6"/>
<dbReference type="PDBsum" id="8UD7"/>
<dbReference type="PDBsum" id="8UD8"/>
<dbReference type="PDBsum" id="8UVR"/>
<dbReference type="PDBsum" id="8UVS"/>
<dbReference type="PDBsum" id="8VTU"/>
<dbReference type="PDBsum" id="8VTV"/>
<dbReference type="PDBsum" id="8VTW"/>
<dbReference type="PDBsum" id="8VTX"/>
<dbReference type="PDBsum" id="8VTY"/>
<dbReference type="PDBsum" id="8WV1"/>
<dbReference type="PDBsum" id="9B00"/>
<dbReference type="PDBsum" id="9D0J"/>
<dbReference type="PDBsum" id="9D7R"/>
<dbReference type="PDBsum" id="9D7S"/>
<dbReference type="PDBsum" id="9D7T"/>
<dbReference type="PDBsum" id="9DFC"/>
<dbReference type="PDBsum" id="9DFD"/>
<dbReference type="PDBsum" id="9DFE"/>
<dbReference type="EMDB" id="EMD-0101"/>
<dbReference type="EMDB" id="EMD-0104"/>
<dbReference type="EMDB" id="EMD-0105"/>
<dbReference type="EMDB" id="EMD-3852"/>
<dbReference type="EMDB" id="EMD-4475"/>
<dbReference type="EMDB" id="EMD-6934"/>
<dbReference type="EMDB" id="EMD-8596"/>
<dbReference type="EMDB" id="EMD-8597"/>
<dbReference type="SMR" id="P60492"/>
<dbReference type="IntAct" id="P60492">
    <property type="interactions" value="7"/>
</dbReference>
<dbReference type="EnsemblBacteria" id="BAD71606">
    <property type="protein sequence ID" value="BAD71606"/>
    <property type="gene ID" value="BAD71606"/>
</dbReference>
<dbReference type="GeneID" id="3169471"/>
<dbReference type="KEGG" id="ttj:TTHA1783"/>
<dbReference type="PATRIC" id="fig|300852.9.peg.1753"/>
<dbReference type="eggNOG" id="COG0261">
    <property type="taxonomic scope" value="Bacteria"/>
</dbReference>
<dbReference type="HOGENOM" id="CLU_061463_3_2_0"/>
<dbReference type="PhylomeDB" id="P60492"/>
<dbReference type="Proteomes" id="UP000000532">
    <property type="component" value="Chromosome"/>
</dbReference>
<dbReference type="GO" id="GO:0005737">
    <property type="term" value="C:cytoplasm"/>
    <property type="evidence" value="ECO:0007669"/>
    <property type="project" value="UniProtKB-ARBA"/>
</dbReference>
<dbReference type="GO" id="GO:1990904">
    <property type="term" value="C:ribonucleoprotein complex"/>
    <property type="evidence" value="ECO:0007669"/>
    <property type="project" value="UniProtKB-KW"/>
</dbReference>
<dbReference type="GO" id="GO:0005840">
    <property type="term" value="C:ribosome"/>
    <property type="evidence" value="ECO:0007669"/>
    <property type="project" value="UniProtKB-KW"/>
</dbReference>
<dbReference type="GO" id="GO:0019843">
    <property type="term" value="F:rRNA binding"/>
    <property type="evidence" value="ECO:0007669"/>
    <property type="project" value="UniProtKB-UniRule"/>
</dbReference>
<dbReference type="GO" id="GO:0003735">
    <property type="term" value="F:structural constituent of ribosome"/>
    <property type="evidence" value="ECO:0007669"/>
    <property type="project" value="InterPro"/>
</dbReference>
<dbReference type="GO" id="GO:0006412">
    <property type="term" value="P:translation"/>
    <property type="evidence" value="ECO:0007669"/>
    <property type="project" value="UniProtKB-UniRule"/>
</dbReference>
<dbReference type="HAMAP" id="MF_01363">
    <property type="entry name" value="Ribosomal_bL21"/>
    <property type="match status" value="1"/>
</dbReference>
<dbReference type="InterPro" id="IPR028909">
    <property type="entry name" value="bL21-like"/>
</dbReference>
<dbReference type="InterPro" id="IPR036164">
    <property type="entry name" value="bL21-like_sf"/>
</dbReference>
<dbReference type="InterPro" id="IPR001787">
    <property type="entry name" value="Ribosomal_bL21"/>
</dbReference>
<dbReference type="NCBIfam" id="TIGR00061">
    <property type="entry name" value="L21"/>
    <property type="match status" value="1"/>
</dbReference>
<dbReference type="PANTHER" id="PTHR21349">
    <property type="entry name" value="50S RIBOSOMAL PROTEIN L21"/>
    <property type="match status" value="1"/>
</dbReference>
<dbReference type="PANTHER" id="PTHR21349:SF0">
    <property type="entry name" value="LARGE RIBOSOMAL SUBUNIT PROTEIN BL21M"/>
    <property type="match status" value="1"/>
</dbReference>
<dbReference type="Pfam" id="PF00829">
    <property type="entry name" value="Ribosomal_L21p"/>
    <property type="match status" value="1"/>
</dbReference>
<dbReference type="SUPFAM" id="SSF141091">
    <property type="entry name" value="L21p-like"/>
    <property type="match status" value="1"/>
</dbReference>
<feature type="chain" id="PRO_0000181018" description="Large ribosomal subunit protein bL21">
    <location>
        <begin position="1"/>
        <end position="101"/>
    </location>
</feature>
<feature type="strand" evidence="5">
    <location>
        <begin position="4"/>
        <end position="7"/>
    </location>
</feature>
<feature type="strand" evidence="5">
    <location>
        <begin position="10"/>
        <end position="13"/>
    </location>
</feature>
<feature type="strand" evidence="5">
    <location>
        <begin position="32"/>
        <end position="34"/>
    </location>
</feature>
<feature type="strand" evidence="5">
    <location>
        <begin position="48"/>
        <end position="51"/>
    </location>
</feature>
<feature type="strand" evidence="5">
    <location>
        <begin position="58"/>
        <end position="66"/>
    </location>
</feature>
<feature type="strand" evidence="5">
    <location>
        <begin position="70"/>
        <end position="76"/>
    </location>
</feature>
<feature type="turn" evidence="5">
    <location>
        <begin position="77"/>
        <end position="80"/>
    </location>
</feature>
<feature type="strand" evidence="5">
    <location>
        <begin position="81"/>
        <end position="87"/>
    </location>
</feature>
<feature type="strand" evidence="5">
    <location>
        <begin position="90"/>
        <end position="98"/>
    </location>
</feature>
<sequence length="101" mass="11047">MFAIVKTGGKQYRVEPGLKLRVEKLDAEPGATVELPVLLLGGEKTVVGTPVVEGASVVAEVLGHGRGKKILVSKFKAKVQYRRKKGHRQPYTELLIKEIRG</sequence>
<protein>
    <recommendedName>
        <fullName evidence="2">Large ribosomal subunit protein bL21</fullName>
    </recommendedName>
    <alternativeName>
        <fullName evidence="4">50S ribosomal protein L21</fullName>
    </alternativeName>
</protein>
<name>RL21_THET8</name>
<proteinExistence type="evidence at protein level"/>
<organism>
    <name type="scientific">Thermus thermophilus (strain ATCC 27634 / DSM 579 / HB8)</name>
    <dbReference type="NCBI Taxonomy" id="300852"/>
    <lineage>
        <taxon>Bacteria</taxon>
        <taxon>Thermotogati</taxon>
        <taxon>Deinococcota</taxon>
        <taxon>Deinococci</taxon>
        <taxon>Thermales</taxon>
        <taxon>Thermaceae</taxon>
        <taxon>Thermus</taxon>
    </lineage>
</organism>